<comment type="function">
    <text evidence="4">Mediates visceral muscle contractile activity (myotropic activity).</text>
</comment>
<comment type="subcellular location">
    <subcellularLocation>
        <location evidence="4">Secreted</location>
    </subcellularLocation>
</comment>
<comment type="tissue specificity">
    <text evidence="2 3">Expressed in abdominal perisympathetic organs and abdominal ganglia.</text>
</comment>
<comment type="mass spectrometry"/>
<comment type="similarity">
    <text evidence="1">Belongs to the periviscerokinin family.</text>
</comment>
<evidence type="ECO:0000255" key="1"/>
<evidence type="ECO:0000269" key="2">
    <source>
    </source>
</evidence>
<evidence type="ECO:0000269" key="3">
    <source ref="2"/>
</evidence>
<evidence type="ECO:0000305" key="4"/>
<accession>P84593</accession>
<reference key="1">
    <citation type="journal article" date="2009" name="BMC Evol. Biol.">
        <title>A proteomic approach for studying insect phylogeny: CAPA peptides of ancient insect taxa (Dictyoptera, Blattoptera) as a test case.</title>
        <authorList>
            <person name="Roth S."/>
            <person name="Fromm B."/>
            <person name="Gaede G."/>
            <person name="Predel R."/>
        </authorList>
    </citation>
    <scope>PROTEIN SEQUENCE</scope>
    <scope>AMIDATION AT VAL-11</scope>
    <source>
        <tissue>Abdominal perisympathetic organs</tissue>
    </source>
</reference>
<reference evidence="4" key="2">
    <citation type="submission" date="2005-05" db="UniProtKB">
        <authorList>
            <person name="Predel R."/>
        </authorList>
    </citation>
    <scope>PROTEIN SEQUENCE</scope>
    <scope>TISSUE SPECIFICITY</scope>
    <scope>MASS SPECTROMETRY</scope>
    <scope>AMIDATION AT VAL-11</scope>
    <source>
        <tissue evidence="2">Abdominal perisympathetic organs</tissue>
    </source>
</reference>
<organism>
    <name type="scientific">Blaberus giganteus</name>
    <name type="common">Giant cockroach</name>
    <dbReference type="NCBI Taxonomy" id="36943"/>
    <lineage>
        <taxon>Eukaryota</taxon>
        <taxon>Metazoa</taxon>
        <taxon>Ecdysozoa</taxon>
        <taxon>Arthropoda</taxon>
        <taxon>Hexapoda</taxon>
        <taxon>Insecta</taxon>
        <taxon>Pterygota</taxon>
        <taxon>Neoptera</taxon>
        <taxon>Polyneoptera</taxon>
        <taxon>Dictyoptera</taxon>
        <taxon>Blattodea</taxon>
        <taxon>Blaberoidea</taxon>
        <taxon>Blaberidae</taxon>
        <taxon>Blaberinae</taxon>
        <taxon>Blaberus</taxon>
    </lineage>
</organism>
<feature type="peptide" id="PRO_0000044284" description="Periviscerokinin-3">
    <location>
        <begin position="1"/>
        <end position="11"/>
    </location>
</feature>
<feature type="modified residue" description="Valine amide" evidence="2 3">
    <location>
        <position position="11"/>
    </location>
</feature>
<dbReference type="GO" id="GO:0005576">
    <property type="term" value="C:extracellular region"/>
    <property type="evidence" value="ECO:0007669"/>
    <property type="project" value="UniProtKB-SubCell"/>
</dbReference>
<dbReference type="GO" id="GO:0007218">
    <property type="term" value="P:neuropeptide signaling pathway"/>
    <property type="evidence" value="ECO:0007669"/>
    <property type="project" value="UniProtKB-KW"/>
</dbReference>
<dbReference type="InterPro" id="IPR013231">
    <property type="entry name" value="Periviscerokinin"/>
</dbReference>
<dbReference type="Pfam" id="PF08259">
    <property type="entry name" value="Periviscerokin"/>
    <property type="match status" value="1"/>
</dbReference>
<protein>
    <recommendedName>
        <fullName>Periviscerokinin-3</fullName>
        <shortName>BlaGi-PVK-3</shortName>
        <shortName>PVK-3</shortName>
    </recommendedName>
</protein>
<proteinExistence type="evidence at protein level"/>
<keyword id="KW-0027">Amidation</keyword>
<keyword id="KW-0903">Direct protein sequencing</keyword>
<keyword id="KW-0527">Neuropeptide</keyword>
<keyword id="KW-0964">Secreted</keyword>
<sequence>GSSGMIPFPRV</sequence>
<name>PVK3_BLAGI</name>